<evidence type="ECO:0000255" key="1">
    <source>
        <dbReference type="HAMAP-Rule" id="MF_00036"/>
    </source>
</evidence>
<protein>
    <recommendedName>
        <fullName evidence="1">Alanine--tRNA ligase</fullName>
        <ecNumber evidence="1">6.1.1.7</ecNumber>
    </recommendedName>
    <alternativeName>
        <fullName evidence="1">Alanyl-tRNA synthetase</fullName>
        <shortName evidence="1">AlaRS</shortName>
    </alternativeName>
</protein>
<dbReference type="EC" id="6.1.1.7" evidence="1"/>
<dbReference type="EMBL" id="CP000449">
    <property type="protein sequence ID" value="ABI65301.1"/>
    <property type="molecule type" value="Genomic_DNA"/>
</dbReference>
<dbReference type="RefSeq" id="WP_011642948.1">
    <property type="nucleotide sequence ID" value="NC_008347.1"/>
</dbReference>
<dbReference type="SMR" id="Q0AQY6"/>
<dbReference type="STRING" id="394221.Mmar10_1008"/>
<dbReference type="KEGG" id="mmr:Mmar10_1008"/>
<dbReference type="eggNOG" id="COG0013">
    <property type="taxonomic scope" value="Bacteria"/>
</dbReference>
<dbReference type="HOGENOM" id="CLU_004485_1_1_5"/>
<dbReference type="OrthoDB" id="9803884at2"/>
<dbReference type="Proteomes" id="UP000001964">
    <property type="component" value="Chromosome"/>
</dbReference>
<dbReference type="GO" id="GO:0005829">
    <property type="term" value="C:cytosol"/>
    <property type="evidence" value="ECO:0007669"/>
    <property type="project" value="TreeGrafter"/>
</dbReference>
<dbReference type="GO" id="GO:0004813">
    <property type="term" value="F:alanine-tRNA ligase activity"/>
    <property type="evidence" value="ECO:0007669"/>
    <property type="project" value="UniProtKB-UniRule"/>
</dbReference>
<dbReference type="GO" id="GO:0002161">
    <property type="term" value="F:aminoacyl-tRNA deacylase activity"/>
    <property type="evidence" value="ECO:0007669"/>
    <property type="project" value="TreeGrafter"/>
</dbReference>
<dbReference type="GO" id="GO:0005524">
    <property type="term" value="F:ATP binding"/>
    <property type="evidence" value="ECO:0007669"/>
    <property type="project" value="UniProtKB-UniRule"/>
</dbReference>
<dbReference type="GO" id="GO:0000049">
    <property type="term" value="F:tRNA binding"/>
    <property type="evidence" value="ECO:0007669"/>
    <property type="project" value="UniProtKB-KW"/>
</dbReference>
<dbReference type="GO" id="GO:0008270">
    <property type="term" value="F:zinc ion binding"/>
    <property type="evidence" value="ECO:0007669"/>
    <property type="project" value="UniProtKB-UniRule"/>
</dbReference>
<dbReference type="GO" id="GO:0006419">
    <property type="term" value="P:alanyl-tRNA aminoacylation"/>
    <property type="evidence" value="ECO:0007669"/>
    <property type="project" value="UniProtKB-UniRule"/>
</dbReference>
<dbReference type="GO" id="GO:0045892">
    <property type="term" value="P:negative regulation of DNA-templated transcription"/>
    <property type="evidence" value="ECO:0007669"/>
    <property type="project" value="TreeGrafter"/>
</dbReference>
<dbReference type="CDD" id="cd00673">
    <property type="entry name" value="AlaRS_core"/>
    <property type="match status" value="1"/>
</dbReference>
<dbReference type="FunFam" id="3.10.310.40:FF:000001">
    <property type="entry name" value="Alanine--tRNA ligase"/>
    <property type="match status" value="1"/>
</dbReference>
<dbReference type="FunFam" id="3.30.54.20:FF:000001">
    <property type="entry name" value="Alanine--tRNA ligase"/>
    <property type="match status" value="1"/>
</dbReference>
<dbReference type="FunFam" id="3.30.930.10:FF:000004">
    <property type="entry name" value="Alanine--tRNA ligase"/>
    <property type="match status" value="1"/>
</dbReference>
<dbReference type="FunFam" id="3.30.980.10:FF:000004">
    <property type="entry name" value="Alanine--tRNA ligase, cytoplasmic"/>
    <property type="match status" value="1"/>
</dbReference>
<dbReference type="Gene3D" id="2.40.30.130">
    <property type="match status" value="1"/>
</dbReference>
<dbReference type="Gene3D" id="3.10.310.40">
    <property type="match status" value="1"/>
</dbReference>
<dbReference type="Gene3D" id="3.30.54.20">
    <property type="match status" value="1"/>
</dbReference>
<dbReference type="Gene3D" id="6.10.250.550">
    <property type="match status" value="1"/>
</dbReference>
<dbReference type="Gene3D" id="3.30.930.10">
    <property type="entry name" value="Bira Bifunctional Protein, Domain 2"/>
    <property type="match status" value="1"/>
</dbReference>
<dbReference type="Gene3D" id="3.30.980.10">
    <property type="entry name" value="Threonyl-trna Synthetase, Chain A, domain 2"/>
    <property type="match status" value="1"/>
</dbReference>
<dbReference type="HAMAP" id="MF_00036_B">
    <property type="entry name" value="Ala_tRNA_synth_B"/>
    <property type="match status" value="1"/>
</dbReference>
<dbReference type="InterPro" id="IPR045864">
    <property type="entry name" value="aa-tRNA-synth_II/BPL/LPL"/>
</dbReference>
<dbReference type="InterPro" id="IPR002318">
    <property type="entry name" value="Ala-tRNA-lgiase_IIc"/>
</dbReference>
<dbReference type="InterPro" id="IPR018162">
    <property type="entry name" value="Ala-tRNA-ligase_IIc_anticod-bd"/>
</dbReference>
<dbReference type="InterPro" id="IPR018165">
    <property type="entry name" value="Ala-tRNA-synth_IIc_core"/>
</dbReference>
<dbReference type="InterPro" id="IPR018164">
    <property type="entry name" value="Ala-tRNA-synth_IIc_N"/>
</dbReference>
<dbReference type="InterPro" id="IPR050058">
    <property type="entry name" value="Ala-tRNA_ligase"/>
</dbReference>
<dbReference type="InterPro" id="IPR023033">
    <property type="entry name" value="Ala_tRNA_ligase_euk/bac"/>
</dbReference>
<dbReference type="InterPro" id="IPR003156">
    <property type="entry name" value="DHHA1_dom"/>
</dbReference>
<dbReference type="InterPro" id="IPR018163">
    <property type="entry name" value="Thr/Ala-tRNA-synth_IIc_edit"/>
</dbReference>
<dbReference type="InterPro" id="IPR009000">
    <property type="entry name" value="Transl_B-barrel_sf"/>
</dbReference>
<dbReference type="InterPro" id="IPR012947">
    <property type="entry name" value="tRNA_SAD"/>
</dbReference>
<dbReference type="NCBIfam" id="TIGR00344">
    <property type="entry name" value="alaS"/>
    <property type="match status" value="1"/>
</dbReference>
<dbReference type="PANTHER" id="PTHR11777:SF9">
    <property type="entry name" value="ALANINE--TRNA LIGASE, CYTOPLASMIC"/>
    <property type="match status" value="1"/>
</dbReference>
<dbReference type="PANTHER" id="PTHR11777">
    <property type="entry name" value="ALANYL-TRNA SYNTHETASE"/>
    <property type="match status" value="1"/>
</dbReference>
<dbReference type="Pfam" id="PF02272">
    <property type="entry name" value="DHHA1"/>
    <property type="match status" value="1"/>
</dbReference>
<dbReference type="Pfam" id="PF01411">
    <property type="entry name" value="tRNA-synt_2c"/>
    <property type="match status" value="1"/>
</dbReference>
<dbReference type="Pfam" id="PF07973">
    <property type="entry name" value="tRNA_SAD"/>
    <property type="match status" value="1"/>
</dbReference>
<dbReference type="PRINTS" id="PR00980">
    <property type="entry name" value="TRNASYNTHALA"/>
</dbReference>
<dbReference type="SMART" id="SM00863">
    <property type="entry name" value="tRNA_SAD"/>
    <property type="match status" value="1"/>
</dbReference>
<dbReference type="SUPFAM" id="SSF55681">
    <property type="entry name" value="Class II aaRS and biotin synthetases"/>
    <property type="match status" value="1"/>
</dbReference>
<dbReference type="SUPFAM" id="SSF101353">
    <property type="entry name" value="Putative anticodon-binding domain of alanyl-tRNA synthetase (AlaRS)"/>
    <property type="match status" value="1"/>
</dbReference>
<dbReference type="SUPFAM" id="SSF55186">
    <property type="entry name" value="ThrRS/AlaRS common domain"/>
    <property type="match status" value="1"/>
</dbReference>
<dbReference type="SUPFAM" id="SSF50447">
    <property type="entry name" value="Translation proteins"/>
    <property type="match status" value="1"/>
</dbReference>
<dbReference type="PROSITE" id="PS50860">
    <property type="entry name" value="AA_TRNA_LIGASE_II_ALA"/>
    <property type="match status" value="1"/>
</dbReference>
<feature type="chain" id="PRO_0000347666" description="Alanine--tRNA ligase">
    <location>
        <begin position="1"/>
        <end position="884"/>
    </location>
</feature>
<feature type="binding site" evidence="1">
    <location>
        <position position="565"/>
    </location>
    <ligand>
        <name>Zn(2+)</name>
        <dbReference type="ChEBI" id="CHEBI:29105"/>
    </ligand>
</feature>
<feature type="binding site" evidence="1">
    <location>
        <position position="569"/>
    </location>
    <ligand>
        <name>Zn(2+)</name>
        <dbReference type="ChEBI" id="CHEBI:29105"/>
    </ligand>
</feature>
<feature type="binding site" evidence="1">
    <location>
        <position position="675"/>
    </location>
    <ligand>
        <name>Zn(2+)</name>
        <dbReference type="ChEBI" id="CHEBI:29105"/>
    </ligand>
</feature>
<feature type="binding site" evidence="1">
    <location>
        <position position="679"/>
    </location>
    <ligand>
        <name>Zn(2+)</name>
        <dbReference type="ChEBI" id="CHEBI:29105"/>
    </ligand>
</feature>
<keyword id="KW-0030">Aminoacyl-tRNA synthetase</keyword>
<keyword id="KW-0067">ATP-binding</keyword>
<keyword id="KW-0963">Cytoplasm</keyword>
<keyword id="KW-0436">Ligase</keyword>
<keyword id="KW-0479">Metal-binding</keyword>
<keyword id="KW-0547">Nucleotide-binding</keyword>
<keyword id="KW-0648">Protein biosynthesis</keyword>
<keyword id="KW-1185">Reference proteome</keyword>
<keyword id="KW-0694">RNA-binding</keyword>
<keyword id="KW-0820">tRNA-binding</keyword>
<keyword id="KW-0862">Zinc</keyword>
<organism>
    <name type="scientific">Maricaulis maris (strain MCS10)</name>
    <name type="common">Caulobacter maris</name>
    <dbReference type="NCBI Taxonomy" id="394221"/>
    <lineage>
        <taxon>Bacteria</taxon>
        <taxon>Pseudomonadati</taxon>
        <taxon>Pseudomonadota</taxon>
        <taxon>Alphaproteobacteria</taxon>
        <taxon>Maricaulales</taxon>
        <taxon>Maricaulaceae</taxon>
        <taxon>Maricaulis</taxon>
    </lineage>
</organism>
<reference key="1">
    <citation type="submission" date="2006-08" db="EMBL/GenBank/DDBJ databases">
        <title>Complete sequence of Maricaulis maris MCS10.</title>
        <authorList>
            <consortium name="US DOE Joint Genome Institute"/>
            <person name="Copeland A."/>
            <person name="Lucas S."/>
            <person name="Lapidus A."/>
            <person name="Barry K."/>
            <person name="Detter J.C."/>
            <person name="Glavina del Rio T."/>
            <person name="Hammon N."/>
            <person name="Israni S."/>
            <person name="Dalin E."/>
            <person name="Tice H."/>
            <person name="Pitluck S."/>
            <person name="Saunders E."/>
            <person name="Brettin T."/>
            <person name="Bruce D."/>
            <person name="Han C."/>
            <person name="Tapia R."/>
            <person name="Gilna P."/>
            <person name="Schmutz J."/>
            <person name="Larimer F."/>
            <person name="Land M."/>
            <person name="Hauser L."/>
            <person name="Kyrpides N."/>
            <person name="Mikhailova N."/>
            <person name="Viollier P."/>
            <person name="Stephens C."/>
            <person name="Richardson P."/>
        </authorList>
    </citation>
    <scope>NUCLEOTIDE SEQUENCE [LARGE SCALE GENOMIC DNA]</scope>
    <source>
        <strain>MCS10</strain>
    </source>
</reference>
<name>SYA_MARMM</name>
<comment type="function">
    <text evidence="1">Catalyzes the attachment of alanine to tRNA(Ala) in a two-step reaction: alanine is first activated by ATP to form Ala-AMP and then transferred to the acceptor end of tRNA(Ala). Also edits incorrectly charged Ser-tRNA(Ala) and Gly-tRNA(Ala) via its editing domain.</text>
</comment>
<comment type="catalytic activity">
    <reaction evidence="1">
        <text>tRNA(Ala) + L-alanine + ATP = L-alanyl-tRNA(Ala) + AMP + diphosphate</text>
        <dbReference type="Rhea" id="RHEA:12540"/>
        <dbReference type="Rhea" id="RHEA-COMP:9657"/>
        <dbReference type="Rhea" id="RHEA-COMP:9923"/>
        <dbReference type="ChEBI" id="CHEBI:30616"/>
        <dbReference type="ChEBI" id="CHEBI:33019"/>
        <dbReference type="ChEBI" id="CHEBI:57972"/>
        <dbReference type="ChEBI" id="CHEBI:78442"/>
        <dbReference type="ChEBI" id="CHEBI:78497"/>
        <dbReference type="ChEBI" id="CHEBI:456215"/>
        <dbReference type="EC" id="6.1.1.7"/>
    </reaction>
</comment>
<comment type="cofactor">
    <cofactor evidence="1">
        <name>Zn(2+)</name>
        <dbReference type="ChEBI" id="CHEBI:29105"/>
    </cofactor>
    <text evidence="1">Binds 1 zinc ion per subunit.</text>
</comment>
<comment type="subcellular location">
    <subcellularLocation>
        <location evidence="1">Cytoplasm</location>
    </subcellularLocation>
</comment>
<comment type="domain">
    <text evidence="1">Consists of three domains; the N-terminal catalytic domain, the editing domain and the C-terminal C-Ala domain. The editing domain removes incorrectly charged amino acids, while the C-Ala domain, along with tRNA(Ala), serves as a bridge to cooperatively bring together the editing and aminoacylation centers thus stimulating deacylation of misacylated tRNAs.</text>
</comment>
<comment type="similarity">
    <text evidence="1">Belongs to the class-II aminoacyl-tRNA synthetase family.</text>
</comment>
<sequence length="884" mass="93754">MASLRDIRATFLDYFAKHEHEVVPSAPLVPQDDPTLLFVNAGMVPFKNSFTGQEKRASLRATSSQKCVRAGGKHNDLDNVGYTARHHTFFEMLGNFSFGDYFKEEAISHAWNLVTGEFGLPAEKLLVTVYAEDEQARALWRKIAGLTDDRIIGISTSDNFWSMGDTGPCGPCSEIFFDHGPSIAGGPPGSPDEDGDRFIEIWNLVFMQYEQLGPDERINLPKPSIDTGMGLERISAILQGKHNNYETDLFRNLIAAGESVLGVKAEGDALASHRVIADHLRSTCFLMADGVTPSNEGRGYVLRRIMRRAMRHAHLLGAGEPVMWKLVDALKSEMGDAYPELERAQALLEETLQVEEERFQRTLGRGLSLLEEATADMGEGDALAGATAFKLYDTYGFPLDLTQDALRAKGMTVDEAGFNSAMDKQRADARASKFSSGDAAPDAVWFAVRDKVGATAFTGYAGTGGKGRLTAIVSGGQEAKALGSGQRAELVFDETPFYGESGGQCGDTGEIRFVDGAVFTVEDTQKRGGDMHAHIGVLTKGEITLGDVAALDADAPRRAAIRANHSATHLAHAALRDVLGAHVTQKGSHVGPDRLRFDFSHNKSVSADQIAAIEAQVNAVIRQNVPVSTREMTPDAAIEAGALALFGEKYGDTVRVLAMGQGLADHATPYSVELCGGTHVERTGDIALFKIIAETAVSSGIRRIEAMTGEGARLYMDEQIGFGRAAADALKTPPSDLATRVAALVDERRKLERQLAEAKKQLAMGGGASGAPAGPETINGVNFIGRVVEGVGGKDLRGLIDEAKAQMGSGVAAFIGVNDGKAALAVGVTDDLKDRFVAVDLVKAGAAAVGGKGGGGRPDFAQAGGPDGAKANDGLAAIRAALAG</sequence>
<accession>Q0AQY6</accession>
<gene>
    <name evidence="1" type="primary">alaS</name>
    <name type="ordered locus">Mmar10_1008</name>
</gene>
<proteinExistence type="inferred from homology"/>